<comment type="function">
    <text evidence="3 4">Possesses triterpene oxidizing activity. Catalyzes the C23 hydroxylation of marneral to form 23-hydroxymarneral. Catalyzes the C23 hydroxylation of marnerol to form 23-hydroxymarnerol.</text>
</comment>
<comment type="cofactor">
    <cofactor evidence="1">
        <name>heme</name>
        <dbReference type="ChEBI" id="CHEBI:30413"/>
    </cofactor>
</comment>
<comment type="biophysicochemical properties">
    <kinetics>
        <KM evidence="4">142 uM for marnerol</KM>
    </kinetics>
</comment>
<comment type="subcellular location">
    <subcellularLocation>
        <location evidence="7">Membrane</location>
        <topology evidence="7">Single-pass membrane protein</topology>
    </subcellularLocation>
</comment>
<comment type="similarity">
    <text evidence="7">Belongs to the cytochrome P450 family.</text>
</comment>
<keyword id="KW-0349">Heme</keyword>
<keyword id="KW-0408">Iron</keyword>
<keyword id="KW-0472">Membrane</keyword>
<keyword id="KW-0479">Metal-binding</keyword>
<keyword id="KW-0503">Monooxygenase</keyword>
<keyword id="KW-0560">Oxidoreductase</keyword>
<keyword id="KW-1185">Reference proteome</keyword>
<keyword id="KW-0812">Transmembrane</keyword>
<keyword id="KW-1133">Transmembrane helix</keyword>
<gene>
    <name type="primary">CYP71A16</name>
    <name evidence="5" type="synonym">MRNO</name>
    <name evidence="6" type="synonym">MRO</name>
    <name type="ordered locus">At5g42590</name>
    <name type="ORF">K16E1.6</name>
</gene>
<dbReference type="EC" id="1.14.-.-"/>
<dbReference type="EMBL" id="AB022210">
    <property type="protein sequence ID" value="BAB09330.1"/>
    <property type="molecule type" value="Genomic_DNA"/>
</dbReference>
<dbReference type="EMBL" id="CP002688">
    <property type="protein sequence ID" value="AED94832.1"/>
    <property type="molecule type" value="Genomic_DNA"/>
</dbReference>
<dbReference type="EMBL" id="BT026460">
    <property type="protein sequence ID" value="ABH04567.1"/>
    <property type="molecule type" value="mRNA"/>
</dbReference>
<dbReference type="RefSeq" id="NP_199073.1">
    <property type="nucleotide sequence ID" value="NM_123623.5"/>
</dbReference>
<dbReference type="SMR" id="Q9FH66"/>
<dbReference type="BioGRID" id="19516">
    <property type="interactions" value="1"/>
</dbReference>
<dbReference type="FunCoup" id="Q9FH66">
    <property type="interactions" value="179"/>
</dbReference>
<dbReference type="STRING" id="3702.Q9FH66"/>
<dbReference type="iPTMnet" id="Q9FH66"/>
<dbReference type="PaxDb" id="3702-AT5G42590.1"/>
<dbReference type="ProteomicsDB" id="240260"/>
<dbReference type="EnsemblPlants" id="AT5G42590.1">
    <property type="protein sequence ID" value="AT5G42590.1"/>
    <property type="gene ID" value="AT5G42590"/>
</dbReference>
<dbReference type="GeneID" id="834266"/>
<dbReference type="Gramene" id="AT5G42590.1">
    <property type="protein sequence ID" value="AT5G42590.1"/>
    <property type="gene ID" value="AT5G42590"/>
</dbReference>
<dbReference type="KEGG" id="ath:AT5G42590"/>
<dbReference type="Araport" id="AT5G42590"/>
<dbReference type="TAIR" id="AT5G42590">
    <property type="gene designation" value="CYP71A16"/>
</dbReference>
<dbReference type="eggNOG" id="KOG0156">
    <property type="taxonomic scope" value="Eukaryota"/>
</dbReference>
<dbReference type="HOGENOM" id="CLU_001570_4_0_1"/>
<dbReference type="InParanoid" id="Q9FH66"/>
<dbReference type="OMA" id="QRDKATW"/>
<dbReference type="PhylomeDB" id="Q9FH66"/>
<dbReference type="SABIO-RK" id="Q9FH66"/>
<dbReference type="PRO" id="PR:Q9FH66"/>
<dbReference type="Proteomes" id="UP000006548">
    <property type="component" value="Chromosome 5"/>
</dbReference>
<dbReference type="ExpressionAtlas" id="Q9FH66">
    <property type="expression patterns" value="baseline and differential"/>
</dbReference>
<dbReference type="GO" id="GO:0009507">
    <property type="term" value="C:chloroplast"/>
    <property type="evidence" value="ECO:0007005"/>
    <property type="project" value="TAIR"/>
</dbReference>
<dbReference type="GO" id="GO:0005783">
    <property type="term" value="C:endoplasmic reticulum"/>
    <property type="evidence" value="ECO:0007005"/>
    <property type="project" value="TAIR"/>
</dbReference>
<dbReference type="GO" id="GO:0016020">
    <property type="term" value="C:membrane"/>
    <property type="evidence" value="ECO:0007669"/>
    <property type="project" value="UniProtKB-SubCell"/>
</dbReference>
<dbReference type="GO" id="GO:0020037">
    <property type="term" value="F:heme binding"/>
    <property type="evidence" value="ECO:0007669"/>
    <property type="project" value="InterPro"/>
</dbReference>
<dbReference type="GO" id="GO:0005506">
    <property type="term" value="F:iron ion binding"/>
    <property type="evidence" value="ECO:0007669"/>
    <property type="project" value="InterPro"/>
</dbReference>
<dbReference type="GO" id="GO:0004497">
    <property type="term" value="F:monooxygenase activity"/>
    <property type="evidence" value="ECO:0007669"/>
    <property type="project" value="UniProtKB-KW"/>
</dbReference>
<dbReference type="GO" id="GO:0016705">
    <property type="term" value="F:oxidoreductase activity, acting on paired donors, with incorporation or reduction of molecular oxygen"/>
    <property type="evidence" value="ECO:0000314"/>
    <property type="project" value="UniProtKB"/>
</dbReference>
<dbReference type="GO" id="GO:0006722">
    <property type="term" value="P:triterpenoid metabolic process"/>
    <property type="evidence" value="ECO:0000314"/>
    <property type="project" value="UniProtKB"/>
</dbReference>
<dbReference type="CDD" id="cd11072">
    <property type="entry name" value="CYP71-like"/>
    <property type="match status" value="1"/>
</dbReference>
<dbReference type="FunFam" id="1.10.630.10:FF:000011">
    <property type="entry name" value="Cytochrome P450 83B1"/>
    <property type="match status" value="1"/>
</dbReference>
<dbReference type="Gene3D" id="1.10.630.10">
    <property type="entry name" value="Cytochrome P450"/>
    <property type="match status" value="1"/>
</dbReference>
<dbReference type="InterPro" id="IPR001128">
    <property type="entry name" value="Cyt_P450"/>
</dbReference>
<dbReference type="InterPro" id="IPR017972">
    <property type="entry name" value="Cyt_P450_CS"/>
</dbReference>
<dbReference type="InterPro" id="IPR002401">
    <property type="entry name" value="Cyt_P450_E_grp-I"/>
</dbReference>
<dbReference type="InterPro" id="IPR036396">
    <property type="entry name" value="Cyt_P450_sf"/>
</dbReference>
<dbReference type="PANTHER" id="PTHR47955:SF15">
    <property type="entry name" value="CYTOCHROME P450 71A2-LIKE"/>
    <property type="match status" value="1"/>
</dbReference>
<dbReference type="PANTHER" id="PTHR47955">
    <property type="entry name" value="CYTOCHROME P450 FAMILY 71 PROTEIN"/>
    <property type="match status" value="1"/>
</dbReference>
<dbReference type="Pfam" id="PF00067">
    <property type="entry name" value="p450"/>
    <property type="match status" value="1"/>
</dbReference>
<dbReference type="PRINTS" id="PR00463">
    <property type="entry name" value="EP450I"/>
</dbReference>
<dbReference type="PRINTS" id="PR00385">
    <property type="entry name" value="P450"/>
</dbReference>
<dbReference type="SUPFAM" id="SSF48264">
    <property type="entry name" value="Cytochrome P450"/>
    <property type="match status" value="1"/>
</dbReference>
<dbReference type="PROSITE" id="PS00086">
    <property type="entry name" value="CYTOCHROME_P450"/>
    <property type="match status" value="1"/>
</dbReference>
<evidence type="ECO:0000250" key="1">
    <source>
        <dbReference type="UniProtKB" id="P04798"/>
    </source>
</evidence>
<evidence type="ECO:0000255" key="2"/>
<evidence type="ECO:0000269" key="3">
    <source>
    </source>
</evidence>
<evidence type="ECO:0000269" key="4">
    <source>
    </source>
</evidence>
<evidence type="ECO:0000303" key="5">
    <source>
    </source>
</evidence>
<evidence type="ECO:0000303" key="6">
    <source>
    </source>
</evidence>
<evidence type="ECO:0000305" key="7"/>
<accession>Q9FH66</accession>
<accession>Q0V7W0</accession>
<proteinExistence type="evidence at protein level"/>
<feature type="chain" id="PRO_0000052067" description="Cytochrome P450 71A16">
    <location>
        <begin position="1"/>
        <end position="497"/>
    </location>
</feature>
<feature type="transmembrane region" description="Helical" evidence="2">
    <location>
        <begin position="1"/>
        <end position="21"/>
    </location>
</feature>
<feature type="binding site" description="axial binding residue" evidence="1">
    <location>
        <position position="439"/>
    </location>
    <ligand>
        <name>heme</name>
        <dbReference type="ChEBI" id="CHEBI:30413"/>
    </ligand>
    <ligandPart>
        <name>Fe</name>
        <dbReference type="ChEBI" id="CHEBI:18248"/>
    </ligandPart>
</feature>
<name>C71AG_ARATH</name>
<organism>
    <name type="scientific">Arabidopsis thaliana</name>
    <name type="common">Mouse-ear cress</name>
    <dbReference type="NCBI Taxonomy" id="3702"/>
    <lineage>
        <taxon>Eukaryota</taxon>
        <taxon>Viridiplantae</taxon>
        <taxon>Streptophyta</taxon>
        <taxon>Embryophyta</taxon>
        <taxon>Tracheophyta</taxon>
        <taxon>Spermatophyta</taxon>
        <taxon>Magnoliopsida</taxon>
        <taxon>eudicotyledons</taxon>
        <taxon>Gunneridae</taxon>
        <taxon>Pentapetalae</taxon>
        <taxon>rosids</taxon>
        <taxon>malvids</taxon>
        <taxon>Brassicales</taxon>
        <taxon>Brassicaceae</taxon>
        <taxon>Camelineae</taxon>
        <taxon>Arabidopsis</taxon>
    </lineage>
</organism>
<protein>
    <recommendedName>
        <fullName>Cytochrome P450 71A16</fullName>
        <ecNumber>1.14.-.-</ecNumber>
    </recommendedName>
    <alternativeName>
        <fullName evidence="6">Marneral oxidase</fullName>
    </alternativeName>
</protein>
<sequence length="497" mass="55628">MEMMILISLCLTTFLTILLFFKSLLKRPNSNLPPSPWRLPVIGNLHQLSLHPHRALSSLSARHGPLMLLRFGRVPVLIVSSADVAHDVMKTHDLKFANRPITKSAHKISNGGRDLVFAPYGEYWRNVKSLCTIHLLSNKMVQSSEKRREEEITLLMETLEEASLSSSSVNLSKLITNMVSDIMGKVVLGKKYSGEEGTIDVKTITKSFLDAVGLSPVGEYIPSLAWIGKITGSDGKLEKITKQFGDFIEKVLQEHEDTTADKETPDFVDMLLTIQRDETAQCQLDKSDLKVIIFEMFLGSTTTTSAVIEWAMTRLMRNPECLKKLQDEIRSVSKMNSYVSGKEVENMNYLKAVIKEVLRLHPPLPLLVPRLLSEDVKLKGYDITAGTQVIINAWAIQRDTATWGSDAQEFRPERHFDSTWDFVGRNFKYIPFGAGRRLCPGIGLGSVMASVTLANLVKRFDWRVEDGPSGYDKPDLVEGAGIDVCRKFPLVVFPSSA</sequence>
<reference key="1">
    <citation type="journal article" date="2000" name="DNA Res.">
        <title>Structural analysis of Arabidopsis thaliana chromosome 5. X. Sequence features of the regions of 3,076,755 bp covered by sixty P1 and TAC clones.</title>
        <authorList>
            <person name="Sato S."/>
            <person name="Nakamura Y."/>
            <person name="Kaneko T."/>
            <person name="Katoh T."/>
            <person name="Asamizu E."/>
            <person name="Kotani H."/>
            <person name="Tabata S."/>
        </authorList>
    </citation>
    <scope>NUCLEOTIDE SEQUENCE [LARGE SCALE GENOMIC DNA]</scope>
    <source>
        <strain>cv. Columbia</strain>
    </source>
</reference>
<reference key="2">
    <citation type="journal article" date="2017" name="Plant J.">
        <title>Araport11: a complete reannotation of the Arabidopsis thaliana reference genome.</title>
        <authorList>
            <person name="Cheng C.Y."/>
            <person name="Krishnakumar V."/>
            <person name="Chan A.P."/>
            <person name="Thibaud-Nissen F."/>
            <person name="Schobel S."/>
            <person name="Town C.D."/>
        </authorList>
    </citation>
    <scope>GENOME REANNOTATION</scope>
    <source>
        <strain>cv. Columbia</strain>
    </source>
</reference>
<reference key="3">
    <citation type="submission" date="2006-08" db="EMBL/GenBank/DDBJ databases">
        <title>Arabidopsis ORF clones.</title>
        <authorList>
            <person name="Quinitio C."/>
            <person name="Chen H."/>
            <person name="Kim C.J."/>
            <person name="Shinn P."/>
            <person name="Ecker J.R."/>
        </authorList>
    </citation>
    <scope>NUCLEOTIDE SEQUENCE [LARGE SCALE MRNA]</scope>
    <source>
        <strain>cv. Columbia</strain>
    </source>
</reference>
<reference key="4">
    <citation type="journal article" date="2013" name="J. Am. Chem. Soc.">
        <title>An effective strategy for exploring unknown metabolic pathways by genome mining.</title>
        <authorList>
            <person name="Castillo D.A."/>
            <person name="Kolesnikova M.D."/>
            <person name="Matsuda S.P."/>
        </authorList>
    </citation>
    <scope>FUNCTION</scope>
</reference>
<reference key="5">
    <citation type="journal article" date="2018" name="Biochim. Biophys. Acta">
        <title>Insights into the functional properties of the marneral oxidase CYP71A16 from Arabidopsis thaliana.</title>
        <authorList>
            <person name="Kranz-Finger S."/>
            <person name="Mahmoud O."/>
            <person name="Ricklefs E."/>
            <person name="Ditz N."/>
            <person name="Bakkes P.J."/>
            <person name="Urlacher V.B."/>
        </authorList>
    </citation>
    <scope>FUNCTION</scope>
    <scope>BIOPHYSICOCHEMICAL PROPERTIES</scope>
</reference>